<comment type="similarity">
    <text evidence="1">To ORF5 in pFZ1.</text>
</comment>
<feature type="chain" id="PRO_0000066434" description="Uncharacterized protein ORF5A">
    <location>
        <begin position="1"/>
        <end position="227"/>
    </location>
</feature>
<proteinExistence type="predicted"/>
<organism>
    <name type="scientific">Methanothermobacter thermautotrophicus</name>
    <name type="common">Methanobacterium thermoformicicum</name>
    <dbReference type="NCBI Taxonomy" id="145262"/>
    <lineage>
        <taxon>Archaea</taxon>
        <taxon>Methanobacteriati</taxon>
        <taxon>Methanobacteriota</taxon>
        <taxon>Methanomada group</taxon>
        <taxon>Methanobacteria</taxon>
        <taxon>Methanobacteriales</taxon>
        <taxon>Methanobacteriaceae</taxon>
        <taxon>Methanothermobacter</taxon>
    </lineage>
</organism>
<dbReference type="EMBL" id="X68366">
    <property type="protein sequence ID" value="CAA48429.1"/>
    <property type="molecule type" value="Genomic_DNA"/>
</dbReference>
<dbReference type="PIR" id="S30305">
    <property type="entry name" value="S26440"/>
</dbReference>
<dbReference type="RefSeq" id="NP_039758.1">
    <property type="nucleotide sequence ID" value="NC_001336.1"/>
</dbReference>
<dbReference type="RefSeq" id="WP_010889844.1">
    <property type="nucleotide sequence ID" value="NC_001336.1"/>
</dbReference>
<dbReference type="SMR" id="P29577"/>
<dbReference type="Gene3D" id="2.60.40.10">
    <property type="entry name" value="Immunoglobulins"/>
    <property type="match status" value="1"/>
</dbReference>
<dbReference type="InterPro" id="IPR047589">
    <property type="entry name" value="DUF11_rpt"/>
</dbReference>
<dbReference type="InterPro" id="IPR013783">
    <property type="entry name" value="Ig-like_fold"/>
</dbReference>
<dbReference type="InterPro" id="IPR001434">
    <property type="entry name" value="OmcB-like_DUF11"/>
</dbReference>
<dbReference type="NCBIfam" id="TIGR01451">
    <property type="entry name" value="B_ant_repeat"/>
    <property type="match status" value="1"/>
</dbReference>
<dbReference type="Pfam" id="PF01345">
    <property type="entry name" value="DUF11"/>
    <property type="match status" value="2"/>
</dbReference>
<geneLocation type="plasmid">
    <name>pFV1</name>
</geneLocation>
<protein>
    <recommendedName>
        <fullName>Uncharacterized protein ORF5A</fullName>
    </recommendedName>
</protein>
<sequence length="227" mass="24682">MRNGTLVLAALLTLFVLAGSSSAADVGIELDKNMSDGSPIKPTYNSTIKIKAIVKAWNLDVQNATARVQLPEGLVVQDYYMSQGYYDLETGTWEIGDIPAYEERSLTFICLLNRTGSVTVNANVTADGDDNSANNNAELTFKVFGISDLEVNVTGNKETARIGDTVRITVKLKNRGPHDANNIKIGNFLSGGLVVQNFSYDAGYFDDITREWIFETLAAGEEAKSKP</sequence>
<keyword id="KW-0614">Plasmid</keyword>
<evidence type="ECO:0000305" key="1"/>
<reference key="1">
    <citation type="journal article" date="1992" name="Nucleic Acids Res.">
        <title>Modular organization of related Archaeal plasmids encoding different restriction-modification systems in Methanobacterium thermoformicicum.</title>
        <authorList>
            <person name="Noelling J."/>
            <person name="van Eeden F.J.M."/>
            <person name="Eggen R.I.L."/>
            <person name="de Vos W.M."/>
        </authorList>
    </citation>
    <scope>NUCLEOTIDE SEQUENCE [GENOMIC DNA]</scope>
    <source>
        <strain>DSM 3848 / THF</strain>
    </source>
</reference>
<name>YPV5A_METTF</name>
<accession>P29577</accession>